<organism>
    <name type="scientific">Bacillus cereus (strain AH820)</name>
    <dbReference type="NCBI Taxonomy" id="405535"/>
    <lineage>
        <taxon>Bacteria</taxon>
        <taxon>Bacillati</taxon>
        <taxon>Bacillota</taxon>
        <taxon>Bacilli</taxon>
        <taxon>Bacillales</taxon>
        <taxon>Bacillaceae</taxon>
        <taxon>Bacillus</taxon>
        <taxon>Bacillus cereus group</taxon>
    </lineage>
</organism>
<proteinExistence type="inferred from homology"/>
<gene>
    <name evidence="1" type="primary">fosB</name>
    <name type="ordered locus">BCAH820_2074</name>
</gene>
<name>FOSB_BACC0</name>
<comment type="function">
    <text evidence="1">Metallothiol transferase which confers resistance to fosfomycin by catalyzing the addition of a thiol cofactor to fosfomycin. L-cysteine is probably the physiological thiol donor.</text>
</comment>
<comment type="cofactor">
    <cofactor evidence="1">
        <name>Mg(2+)</name>
        <dbReference type="ChEBI" id="CHEBI:18420"/>
    </cofactor>
</comment>
<comment type="subunit">
    <text evidence="1">Homodimer.</text>
</comment>
<comment type="subcellular location">
    <subcellularLocation>
        <location evidence="1">Cytoplasm</location>
    </subcellularLocation>
</comment>
<comment type="similarity">
    <text evidence="1">Belongs to the fosfomycin resistance protein family. FosB subfamily.</text>
</comment>
<keyword id="KW-0046">Antibiotic resistance</keyword>
<keyword id="KW-0963">Cytoplasm</keyword>
<keyword id="KW-0460">Magnesium</keyword>
<keyword id="KW-0479">Metal-binding</keyword>
<keyword id="KW-0808">Transferase</keyword>
<protein>
    <recommendedName>
        <fullName evidence="1">Metallothiol transferase FosB</fullName>
        <ecNumber evidence="1">2.5.1.-</ecNumber>
    </recommendedName>
    <alternativeName>
        <fullName evidence="1">Fosfomycin resistance protein</fullName>
    </alternativeName>
</protein>
<reference key="1">
    <citation type="submission" date="2008-10" db="EMBL/GenBank/DDBJ databases">
        <title>Genome sequence of Bacillus cereus AH820.</title>
        <authorList>
            <person name="Dodson R.J."/>
            <person name="Durkin A.S."/>
            <person name="Rosovitz M.J."/>
            <person name="Rasko D.A."/>
            <person name="Hoffmaster A."/>
            <person name="Ravel J."/>
            <person name="Sutton G."/>
        </authorList>
    </citation>
    <scope>NUCLEOTIDE SEQUENCE [LARGE SCALE GENOMIC DNA]</scope>
    <source>
        <strain>AH820</strain>
    </source>
</reference>
<accession>B7JKN1</accession>
<dbReference type="EC" id="2.5.1.-" evidence="1"/>
<dbReference type="EMBL" id="CP001283">
    <property type="protein sequence ID" value="ACK88879.1"/>
    <property type="molecule type" value="Genomic_DNA"/>
</dbReference>
<dbReference type="RefSeq" id="WP_000911690.1">
    <property type="nucleotide sequence ID" value="NC_011773.1"/>
</dbReference>
<dbReference type="SMR" id="B7JKN1"/>
<dbReference type="GeneID" id="45021958"/>
<dbReference type="KEGG" id="bcu:BCAH820_2074"/>
<dbReference type="HOGENOM" id="CLU_121356_0_0_9"/>
<dbReference type="Proteomes" id="UP000001363">
    <property type="component" value="Chromosome"/>
</dbReference>
<dbReference type="GO" id="GO:0005737">
    <property type="term" value="C:cytoplasm"/>
    <property type="evidence" value="ECO:0007669"/>
    <property type="project" value="UniProtKB-SubCell"/>
</dbReference>
<dbReference type="GO" id="GO:0000287">
    <property type="term" value="F:magnesium ion binding"/>
    <property type="evidence" value="ECO:0007669"/>
    <property type="project" value="UniProtKB-UniRule"/>
</dbReference>
<dbReference type="GO" id="GO:0016765">
    <property type="term" value="F:transferase activity, transferring alkyl or aryl (other than methyl) groups"/>
    <property type="evidence" value="ECO:0007669"/>
    <property type="project" value="UniProtKB-UniRule"/>
</dbReference>
<dbReference type="GO" id="GO:0046677">
    <property type="term" value="P:response to antibiotic"/>
    <property type="evidence" value="ECO:0007669"/>
    <property type="project" value="UniProtKB-UniRule"/>
</dbReference>
<dbReference type="FunFam" id="3.10.180.10:FF:000015">
    <property type="entry name" value="Metallothiol transferase FosB"/>
    <property type="match status" value="1"/>
</dbReference>
<dbReference type="Gene3D" id="3.10.180.10">
    <property type="entry name" value="2,3-Dihydroxybiphenyl 1,2-Dioxygenase, domain 1"/>
    <property type="match status" value="1"/>
</dbReference>
<dbReference type="HAMAP" id="MF_01512">
    <property type="entry name" value="FosB"/>
    <property type="match status" value="1"/>
</dbReference>
<dbReference type="InterPro" id="IPR051332">
    <property type="entry name" value="Fosfomycin_Res_Enzymes"/>
</dbReference>
<dbReference type="InterPro" id="IPR029068">
    <property type="entry name" value="Glyas_Bleomycin-R_OHBP_Dase"/>
</dbReference>
<dbReference type="InterPro" id="IPR004360">
    <property type="entry name" value="Glyas_Fos-R_dOase_dom"/>
</dbReference>
<dbReference type="InterPro" id="IPR022858">
    <property type="entry name" value="Metallothiol_Trafse_FosB"/>
</dbReference>
<dbReference type="InterPro" id="IPR037523">
    <property type="entry name" value="VOC"/>
</dbReference>
<dbReference type="NCBIfam" id="NF000493">
    <property type="entry name" value="Fos_BSH"/>
    <property type="match status" value="1"/>
</dbReference>
<dbReference type="NCBIfam" id="NF041541">
    <property type="entry name" value="fosBx1_fam"/>
    <property type="match status" value="1"/>
</dbReference>
<dbReference type="NCBIfam" id="NF003152">
    <property type="entry name" value="PRK04101.1"/>
    <property type="match status" value="1"/>
</dbReference>
<dbReference type="PANTHER" id="PTHR36113:SF6">
    <property type="entry name" value="FOSFOMYCIN RESISTANCE PROTEIN FOSX"/>
    <property type="match status" value="1"/>
</dbReference>
<dbReference type="PANTHER" id="PTHR36113">
    <property type="entry name" value="LYASE, PUTATIVE-RELATED-RELATED"/>
    <property type="match status" value="1"/>
</dbReference>
<dbReference type="Pfam" id="PF00903">
    <property type="entry name" value="Glyoxalase"/>
    <property type="match status" value="1"/>
</dbReference>
<dbReference type="SUPFAM" id="SSF54593">
    <property type="entry name" value="Glyoxalase/Bleomycin resistance protein/Dihydroxybiphenyl dioxygenase"/>
    <property type="match status" value="1"/>
</dbReference>
<dbReference type="PROSITE" id="PS51819">
    <property type="entry name" value="VOC"/>
    <property type="match status" value="1"/>
</dbReference>
<evidence type="ECO:0000255" key="1">
    <source>
        <dbReference type="HAMAP-Rule" id="MF_01512"/>
    </source>
</evidence>
<evidence type="ECO:0000255" key="2">
    <source>
        <dbReference type="PROSITE-ProRule" id="PRU01163"/>
    </source>
</evidence>
<feature type="chain" id="PRO_1000146145" description="Metallothiol transferase FosB">
    <location>
        <begin position="1"/>
        <end position="138"/>
    </location>
</feature>
<feature type="domain" description="VOC" evidence="2">
    <location>
        <begin position="4"/>
        <end position="119"/>
    </location>
</feature>
<feature type="active site" description="Proton donor/acceptor" evidence="2">
    <location>
        <position position="115"/>
    </location>
</feature>
<feature type="binding site" evidence="1">
    <location>
        <position position="7"/>
    </location>
    <ligand>
        <name>Mg(2+)</name>
        <dbReference type="ChEBI" id="CHEBI:18420"/>
    </ligand>
</feature>
<feature type="binding site" evidence="1">
    <location>
        <position position="66"/>
    </location>
    <ligand>
        <name>Mg(2+)</name>
        <dbReference type="ChEBI" id="CHEBI:18420"/>
    </ligand>
</feature>
<feature type="binding site" evidence="1">
    <location>
        <position position="115"/>
    </location>
    <ligand>
        <name>Mg(2+)</name>
        <dbReference type="ChEBI" id="CHEBI:18420"/>
    </ligand>
</feature>
<sequence length="138" mass="16538">MLKGINHLCFSVSNLEDSITFYEKVLEGELLVRGRKLAYFNICGVWIALNEEIHIPRKEIHQSYTHIAFSVEQKDFERLLQRLEENDVHILQGRERDVRDCESIYFVDPDGHKFEFHSGTLQERLNYYREDKPHMTFY</sequence>